<accession>Q50LG3</accession>
<name>AFT91_ALTAL</name>
<dbReference type="EC" id="2.3.1.-" evidence="12"/>
<dbReference type="EMBL" id="AB179766">
    <property type="protein sequence ID" value="BAD97694.1"/>
    <property type="molecule type" value="Genomic_DNA"/>
</dbReference>
<dbReference type="SMR" id="Q50LG3"/>
<dbReference type="VEuPathDB" id="FungiDB:CC77DRAFT_937923"/>
<dbReference type="VEuPathDB" id="FungiDB:CC77DRAFT_976935"/>
<dbReference type="GO" id="GO:0004312">
    <property type="term" value="F:fatty acid synthase activity"/>
    <property type="evidence" value="ECO:0007669"/>
    <property type="project" value="TreeGrafter"/>
</dbReference>
<dbReference type="GO" id="GO:0008168">
    <property type="term" value="F:methyltransferase activity"/>
    <property type="evidence" value="ECO:0007669"/>
    <property type="project" value="UniProtKB-KW"/>
</dbReference>
<dbReference type="GO" id="GO:0016491">
    <property type="term" value="F:oxidoreductase activity"/>
    <property type="evidence" value="ECO:0007669"/>
    <property type="project" value="UniProtKB-KW"/>
</dbReference>
<dbReference type="GO" id="GO:0031177">
    <property type="term" value="F:phosphopantetheine binding"/>
    <property type="evidence" value="ECO:0007669"/>
    <property type="project" value="InterPro"/>
</dbReference>
<dbReference type="GO" id="GO:0006633">
    <property type="term" value="P:fatty acid biosynthetic process"/>
    <property type="evidence" value="ECO:0007669"/>
    <property type="project" value="TreeGrafter"/>
</dbReference>
<dbReference type="GO" id="GO:0032259">
    <property type="term" value="P:methylation"/>
    <property type="evidence" value="ECO:0007669"/>
    <property type="project" value="UniProtKB-KW"/>
</dbReference>
<dbReference type="GO" id="GO:0044550">
    <property type="term" value="P:secondary metabolite biosynthetic process"/>
    <property type="evidence" value="ECO:0007669"/>
    <property type="project" value="TreeGrafter"/>
</dbReference>
<dbReference type="CDD" id="cd02440">
    <property type="entry name" value="AdoMet_MTases"/>
    <property type="match status" value="1"/>
</dbReference>
<dbReference type="CDD" id="cd05274">
    <property type="entry name" value="KR_FAS_SDR_x"/>
    <property type="match status" value="1"/>
</dbReference>
<dbReference type="CDD" id="cd00833">
    <property type="entry name" value="PKS"/>
    <property type="match status" value="1"/>
</dbReference>
<dbReference type="Gene3D" id="3.40.47.10">
    <property type="match status" value="1"/>
</dbReference>
<dbReference type="Gene3D" id="3.30.559.10">
    <property type="entry name" value="Chloramphenicol acetyltransferase-like domain"/>
    <property type="match status" value="1"/>
</dbReference>
<dbReference type="Gene3D" id="3.30.559.70">
    <property type="entry name" value="Choline/Carnitine o-acyltransferase, domain 2"/>
    <property type="match status" value="1"/>
</dbReference>
<dbReference type="Gene3D" id="3.40.366.10">
    <property type="entry name" value="Malonyl-Coenzyme A Acyl Carrier Protein, domain 2"/>
    <property type="match status" value="1"/>
</dbReference>
<dbReference type="Gene3D" id="3.90.180.10">
    <property type="entry name" value="Medium-chain alcohol dehydrogenases, catalytic domain"/>
    <property type="match status" value="1"/>
</dbReference>
<dbReference type="Gene3D" id="3.40.50.720">
    <property type="entry name" value="NAD(P)-binding Rossmann-like Domain"/>
    <property type="match status" value="1"/>
</dbReference>
<dbReference type="Gene3D" id="3.10.129.110">
    <property type="entry name" value="Polyketide synthase dehydratase"/>
    <property type="match status" value="1"/>
</dbReference>
<dbReference type="Gene3D" id="3.40.50.150">
    <property type="entry name" value="Vaccinia Virus protein VP39"/>
    <property type="match status" value="1"/>
</dbReference>
<dbReference type="InterPro" id="IPR001227">
    <property type="entry name" value="Ac_transferase_dom_sf"/>
</dbReference>
<dbReference type="InterPro" id="IPR036736">
    <property type="entry name" value="ACP-like_sf"/>
</dbReference>
<dbReference type="InterPro" id="IPR014043">
    <property type="entry name" value="Acyl_transferase_dom"/>
</dbReference>
<dbReference type="InterPro" id="IPR016035">
    <property type="entry name" value="Acyl_Trfase/lysoPLipase"/>
</dbReference>
<dbReference type="InterPro" id="IPR023213">
    <property type="entry name" value="CAT-like_dom_sf"/>
</dbReference>
<dbReference type="InterPro" id="IPR039551">
    <property type="entry name" value="Cho/carn_acyl_trans"/>
</dbReference>
<dbReference type="InterPro" id="IPR042231">
    <property type="entry name" value="Cho/carn_acyl_trans_2"/>
</dbReference>
<dbReference type="InterPro" id="IPR011032">
    <property type="entry name" value="GroES-like_sf"/>
</dbReference>
<dbReference type="InterPro" id="IPR014031">
    <property type="entry name" value="Ketoacyl_synth_C"/>
</dbReference>
<dbReference type="InterPro" id="IPR014030">
    <property type="entry name" value="Ketoacyl_synth_N"/>
</dbReference>
<dbReference type="InterPro" id="IPR016036">
    <property type="entry name" value="Malonyl_transacylase_ACP-bd"/>
</dbReference>
<dbReference type="InterPro" id="IPR013217">
    <property type="entry name" value="Methyltransf_12"/>
</dbReference>
<dbReference type="InterPro" id="IPR036291">
    <property type="entry name" value="NAD(P)-bd_dom_sf"/>
</dbReference>
<dbReference type="InterPro" id="IPR056501">
    <property type="entry name" value="NAD-bd_HRPKS_sdrA"/>
</dbReference>
<dbReference type="InterPro" id="IPR032821">
    <property type="entry name" value="PKS_assoc"/>
</dbReference>
<dbReference type="InterPro" id="IPR020841">
    <property type="entry name" value="PKS_Beta-ketoAc_synthase_dom"/>
</dbReference>
<dbReference type="InterPro" id="IPR042104">
    <property type="entry name" value="PKS_dehydratase_sf"/>
</dbReference>
<dbReference type="InterPro" id="IPR020807">
    <property type="entry name" value="PKS_DH"/>
</dbReference>
<dbReference type="InterPro" id="IPR049551">
    <property type="entry name" value="PKS_DH_C"/>
</dbReference>
<dbReference type="InterPro" id="IPR049552">
    <property type="entry name" value="PKS_DH_N"/>
</dbReference>
<dbReference type="InterPro" id="IPR020843">
    <property type="entry name" value="PKS_ER"/>
</dbReference>
<dbReference type="InterPro" id="IPR013968">
    <property type="entry name" value="PKS_KR"/>
</dbReference>
<dbReference type="InterPro" id="IPR049900">
    <property type="entry name" value="PKS_mFAS_DH"/>
</dbReference>
<dbReference type="InterPro" id="IPR050091">
    <property type="entry name" value="PKS_NRPS_Biosynth_Enz"/>
</dbReference>
<dbReference type="InterPro" id="IPR020806">
    <property type="entry name" value="PKS_PP-bd"/>
</dbReference>
<dbReference type="InterPro" id="IPR009081">
    <property type="entry name" value="PP-bd_ACP"/>
</dbReference>
<dbReference type="InterPro" id="IPR029063">
    <property type="entry name" value="SAM-dependent_MTases_sf"/>
</dbReference>
<dbReference type="InterPro" id="IPR016039">
    <property type="entry name" value="Thiolase-like"/>
</dbReference>
<dbReference type="PANTHER" id="PTHR43775">
    <property type="entry name" value="FATTY ACID SYNTHASE"/>
    <property type="match status" value="1"/>
</dbReference>
<dbReference type="PANTHER" id="PTHR43775:SF22">
    <property type="entry name" value="SYNTHASE, PUTATIVE (JCVI)-RELATED"/>
    <property type="match status" value="1"/>
</dbReference>
<dbReference type="Pfam" id="PF23297">
    <property type="entry name" value="ACP_SdgA_C"/>
    <property type="match status" value="1"/>
</dbReference>
<dbReference type="Pfam" id="PF00698">
    <property type="entry name" value="Acyl_transf_1"/>
    <property type="match status" value="1"/>
</dbReference>
<dbReference type="Pfam" id="PF00755">
    <property type="entry name" value="Carn_acyltransf"/>
    <property type="match status" value="1"/>
</dbReference>
<dbReference type="Pfam" id="PF16197">
    <property type="entry name" value="KAsynt_C_assoc"/>
    <property type="match status" value="1"/>
</dbReference>
<dbReference type="Pfam" id="PF00109">
    <property type="entry name" value="ketoacyl-synt"/>
    <property type="match status" value="1"/>
</dbReference>
<dbReference type="Pfam" id="PF02801">
    <property type="entry name" value="Ketoacyl-synt_C"/>
    <property type="match status" value="1"/>
</dbReference>
<dbReference type="Pfam" id="PF08659">
    <property type="entry name" value="KR"/>
    <property type="match status" value="1"/>
</dbReference>
<dbReference type="Pfam" id="PF08242">
    <property type="entry name" value="Methyltransf_12"/>
    <property type="match status" value="1"/>
</dbReference>
<dbReference type="Pfam" id="PF23114">
    <property type="entry name" value="NAD-bd_HRPKS_sdrA"/>
    <property type="match status" value="1"/>
</dbReference>
<dbReference type="Pfam" id="PF21089">
    <property type="entry name" value="PKS_DH_N"/>
    <property type="match status" value="1"/>
</dbReference>
<dbReference type="Pfam" id="PF14765">
    <property type="entry name" value="PS-DH"/>
    <property type="match status" value="1"/>
</dbReference>
<dbReference type="SMART" id="SM00827">
    <property type="entry name" value="PKS_AT"/>
    <property type="match status" value="1"/>
</dbReference>
<dbReference type="SMART" id="SM00826">
    <property type="entry name" value="PKS_DH"/>
    <property type="match status" value="1"/>
</dbReference>
<dbReference type="SMART" id="SM00829">
    <property type="entry name" value="PKS_ER"/>
    <property type="match status" value="1"/>
</dbReference>
<dbReference type="SMART" id="SM00822">
    <property type="entry name" value="PKS_KR"/>
    <property type="match status" value="1"/>
</dbReference>
<dbReference type="SMART" id="SM00825">
    <property type="entry name" value="PKS_KS"/>
    <property type="match status" value="1"/>
</dbReference>
<dbReference type="SMART" id="SM00823">
    <property type="entry name" value="PKS_PP"/>
    <property type="match status" value="1"/>
</dbReference>
<dbReference type="SUPFAM" id="SSF47336">
    <property type="entry name" value="ACP-like"/>
    <property type="match status" value="1"/>
</dbReference>
<dbReference type="SUPFAM" id="SSF52777">
    <property type="entry name" value="CoA-dependent acyltransferases"/>
    <property type="match status" value="2"/>
</dbReference>
<dbReference type="SUPFAM" id="SSF52151">
    <property type="entry name" value="FabD/lysophospholipase-like"/>
    <property type="match status" value="1"/>
</dbReference>
<dbReference type="SUPFAM" id="SSF50129">
    <property type="entry name" value="GroES-like"/>
    <property type="match status" value="1"/>
</dbReference>
<dbReference type="SUPFAM" id="SSF51735">
    <property type="entry name" value="NAD(P)-binding Rossmann-fold domains"/>
    <property type="match status" value="2"/>
</dbReference>
<dbReference type="SUPFAM" id="SSF55048">
    <property type="entry name" value="Probable ACP-binding domain of malonyl-CoA ACP transacylase"/>
    <property type="match status" value="1"/>
</dbReference>
<dbReference type="SUPFAM" id="SSF53335">
    <property type="entry name" value="S-adenosyl-L-methionine-dependent methyltransferases"/>
    <property type="match status" value="1"/>
</dbReference>
<dbReference type="SUPFAM" id="SSF53901">
    <property type="entry name" value="Thiolase-like"/>
    <property type="match status" value="1"/>
</dbReference>
<dbReference type="PROSITE" id="PS50075">
    <property type="entry name" value="CARRIER"/>
    <property type="match status" value="1"/>
</dbReference>
<dbReference type="PROSITE" id="PS52004">
    <property type="entry name" value="KS3_2"/>
    <property type="match status" value="1"/>
</dbReference>
<dbReference type="PROSITE" id="PS52019">
    <property type="entry name" value="PKS_MFAS_DH"/>
    <property type="match status" value="1"/>
</dbReference>
<sequence length="3005" mass="330824">MDPQQRLLLETTYEALENAGIPQANTNGSNTSVHVAMFTRDYDRNVYKDTVGIPKYQVTGTGEAIMSNRISHIFNLHGPSMTIDTGCSGAMTAVSQACMSLRSGDCDIALAGAVNLIMSPDHHISMSNLHMLNAEGKSYAFDSRGAGYGRGEGVATIVMKRLDDAVRCHDPIRAVILDAVINQDGYTAGITLPSSEAQAQLERKALNRVGLKPQEVAYIEAHGTGTAAGDAAELDALSSVFCVDRDLPLYVGSVKSNIGHLEAASGMAALIKATLMLENEAIPPSINFSRPKENLRIDERNIKIPTALQPWPKGASARICVNSFGYGGTNAHAILERAPERPTVMGPKNTPYLFLLSAKSRASLSRTVKNIKEWISSQHDTLSLRDLSYTLNQRRSMMSWRFGGVATTHQELLDVLTQELKSSSAVRTPTRANINFVFTGQGAQWPGMGRELLVVRAFKDSLNQSRNVLHQLGASWDLFDELVRDKESSRLKEPQLSQPVTTAIQIALVETFRSFGISPGAVVGHSSGEIAAAYTAGYLSHDTAIKIAYYRGFSAEIAKAKGMENGAMLATDLGEATAREYVAKLVKGKATVACQNSPNSSTLSGDTTAVSELEEMLSKDSVFNRRLQVDAAYHSHHMEAAAEEYEKSLGDVCVEQPLTKVRFFSSVVGREVWEGFDSTYWTTNLTSTVRYCDALQALCRTQFAQPQGEQSHQLFVEIGPHNALAGPTRQSISDLDKQSTYSYMSALVRGSGGVGTILGVLSELIKHGHHVDLAALRTLDPTCQEANVLHDLPSYAWDHSKRFWNESRLSREYRLRKHPYHDLLGLKMTDHTPLRPSWRYLVGVEGLPWLKDHIVDGTIIFPGSGYLCMVMEAAETSFTKALIIPESPSRVELQLNFCPVGPTNGNAFHFVITAVSAAGIWAEHCKGSVEVKYAAANRPRKALDIPVTFDQISEGLDVESEAIEKISSQELYDELSAVGNTYGPMFRGINKAIIQADRSASFISIPDVTRMMPAQYMRPHFIHPTTLDILLHSSLPLVNRQVGQASIMPVRIDELALSTLIQNESGSSLAAITTLTSADLRGGDADILVFSDSGDATDRPVMSVSGLELRRLAPTGQPATSGTARDICYEMKWDADVEFISAEFLRPQKLPPSVKQKWDVIDRATDIYIQRCLQHLGKRALDASGDHHKLLVKWMNSTVAKTQTCEDPTEAKILEMSSSQGVEGEFLARLGPALPEIITGKVNPLQLMLEDGLLYRVYADDSSKRCYDLMAGYLNSKSFKQSGFAVLEIGAGTGGATLPFLQSLDHNGNRPVVFDFTDISAGLFESAKERLQDWSDVVNFRTLDIEKNPKDQGFTEGFYDIILACNVLHATSSVDSTLSKVRQLLKPEGVLLLLEVTKPRHYHNVTFGTLPGWWKGVNDSRAAGPLLSPEGWSTRMRKASLNMQLAVYDDNETPISSLIVAKPIQEVTKKKQVQIVLDSSVPIWLRKFADQVLSRLAAEEFGVSLTSWDEMTVNPHDSSIWLVIDNGEHPVLSHVTPIQLQSVTEMLKAPSHVLWISVVHDPQFSENPFKHLITGISRTAHAENDRLKMITVDVQQSICQEEGKEEGNRFMSFLMGVVISLSKADLLTIEREYVYKNGQVNIPRVLPSPDIQGWMPGNVTGLPEMKPFHDSQKAWILDIERSEFMKMPVFTENDAFRESLDENEIEIDVEAIGVPELLIRHSINGFAGRVIAIRSKVDGIKVKDNIVAFAASSYPNRLRVHQSQARVVPQGVSSRIAAALLIPLMAVSHALVNIASTNSPIVLIHGATGTIAQSSVAIAKALGSVIIQTVSGDVESPALDDVVSTFADHVVPDQGYSSKHQLQKVLRQRKVDVILSFSKNRVSKEVAGTLKPFGHCIHIENGPKPSLQIEQSQYLSNATISRFRMDAVVRAQPEAVAFAFSTVIDALGSSKMDSKAVNVVSRPVGELDRLFKQEYQHHRNESTVLHVDDCLVRVWSSEKRSLSLDSDATYVVSGGRGDLGKRFIRLMCAAGARHFVTLSRGVSSSHTQLTSLQTELQENVRNDCVLQDIQCNIADLNEVQNALAIIKTQGLPPVRGIIQAAVALEDSTMNSITSDSFNRVLGAKAHGTMNLRNTFAPEGLAFFISLSSAVTVIGTSGQSSYNAENSVQDALAQFSNRDGCHYMSLNVGTIEGADATADNQTRVQALRRQGLISITPDELLGFFRYSVTSEARKGHRCRQAIIGFTPESLSLTTAANGTVHSPMFTHVRERGDRKTSEKRSGAKKTFKATIQETRDFEKISQLMALWIGEKVANLVAADASEVDLGSSIADFYVDSLIIIELRNWINRELQASIFIPETMESQNLLSLGAKVASRSALVPSSISSKVSNSNDEALSIDSTASLSLAPSSQPPEMLETPYAQLQHLPAADLHTALDMLIESRKGFCTQAELEETLRASAEWRGVEKADRDAIVSKFTGSNLRLESYEKALHLERREPLQDHAVFYLGHITDQVPDHTQAERAAIIVHSTLSFKHQLEMGVLEQNSLNGSPLCMSTLQWLFHATQEPRHELDVMKKYRASGNVAIMRRGHIFVATVHDDDGLAALVALFEDVIQHSEDAIPALSILTSHRRDDWAQLKGSLESITGNAAKLEAIQSAAFVICLDEGAPTNPGERATSQLLNDRHLSNRWLDKTLQFSVAANGVSSLIGLNSTLDGLSVKQLHEAITEQILASTRGHMDILHQDHERRPAKRLSVFRELGFEIPPPITTAIEEKRLRNLAHYPSVAAFSQHYADLNRTFLGTRRLRSKGTVLMAIVFAIRLFYGRFEPVWETVTLAKYARGRTDWLQIVTPDVMEWIESAIQRNSGGKSTICGRDMLVQLQASTTKHTQNVRQVADSRGFVEPLYAFQAFIESEGRKLPRLFKSEAWKHSDRNATPKLVKTDCLGSGGWLRMQEAGFLMPHPNSLFIHYEVHHTDPLVLVQGRDRDVAKFSGCLNEAVKAMRTIIEQSS</sequence>
<organism>
    <name type="scientific">Alternaria alternata</name>
    <name type="common">Alternaria rot fungus</name>
    <name type="synonym">Torula alternata</name>
    <dbReference type="NCBI Taxonomy" id="5599"/>
    <lineage>
        <taxon>Eukaryota</taxon>
        <taxon>Fungi</taxon>
        <taxon>Dikarya</taxon>
        <taxon>Ascomycota</taxon>
        <taxon>Pezizomycotina</taxon>
        <taxon>Dothideomycetes</taxon>
        <taxon>Pleosporomycetidae</taxon>
        <taxon>Pleosporales</taxon>
        <taxon>Pleosporineae</taxon>
        <taxon>Pleosporaceae</taxon>
        <taxon>Alternaria</taxon>
        <taxon>Alternaria sect. Alternaria</taxon>
        <taxon>Alternaria alternata complex</taxon>
    </lineage>
</organism>
<reference key="1">
    <citation type="journal article" date="2005" name="J. Gen. Plant Pathol.">
        <title>Structural analysis of cosmid clone pcAFT-2 carrying AFT10-1 encoding an acyl-CoA dehydrogenase involved in AF-toxin production in the strawberry pathotype of Alternaria alternata.</title>
        <authorList>
            <person name="Ruswandi S."/>
            <person name="Kitani K."/>
            <person name="Akimitsu K."/>
            <person name="Tsuge T."/>
            <person name="Shiraishi T."/>
            <person name="Yamamoto M."/>
        </authorList>
    </citation>
    <scope>NUCLEOTIDE SEQUENCE [GENOMIC DNA]</scope>
    <scope>FUNCTION</scope>
    <scope>PATHWAY</scope>
    <source>
        <strain>NAF8</strain>
    </source>
</reference>
<reference key="2">
    <citation type="journal article" date="2002" name="Genetics">
        <title>A conditionally dispensable chromosome controls host-specific pathogenicity in the fungal plant pathogen Alternaria alternata.</title>
        <authorList>
            <person name="Hatta R."/>
            <person name="Ito K."/>
            <person name="Hosaki Y."/>
            <person name="Tanaka T."/>
            <person name="Tanaka A."/>
            <person name="Yamamoto M."/>
            <person name="Akimitsu K."/>
            <person name="Tsuge T."/>
        </authorList>
    </citation>
    <scope>FUNCTION</scope>
    <source>
        <strain>NAF8</strain>
    </source>
</reference>
<reference key="3">
    <citation type="journal article" date="2004" name="Mol. Microbiol.">
        <title>Dissection of the host range of the fungal plant pathogen Alternaria alternata by modification of secondary metabolism.</title>
        <authorList>
            <person name="Ito K."/>
            <person name="Tanaka T."/>
            <person name="Hatta R."/>
            <person name="Yamamoto M."/>
            <person name="Akimitsu K."/>
            <person name="Tsuge T."/>
        </authorList>
    </citation>
    <scope>FUNCTION</scope>
    <source>
        <strain>NAF8</strain>
    </source>
</reference>
<reference key="4">
    <citation type="journal article" date="2008" name="Mol. Plant Microbe Interact.">
        <title>Functional analysis of a multicopy host-selective ACT-toxin biosynthesis gene in the tangerine pathotype of Alternaria alternata using RNA silencing.</title>
        <authorList>
            <person name="Miyamoto Y."/>
            <person name="Masunaka A."/>
            <person name="Tsuge T."/>
            <person name="Yamamoto M."/>
            <person name="Ohtani K."/>
            <person name="Fukumoto T."/>
            <person name="Gomi K."/>
            <person name="Peever T.L."/>
            <person name="Akimitsu K."/>
        </authorList>
    </citation>
    <scope>FUNCTION</scope>
    <source>
        <strain>NAF8</strain>
    </source>
</reference>
<reference key="5">
    <citation type="journal article" date="2013" name="FEMS Microbiol. Rev.">
        <title>Host-selective toxins produced by the plant pathogenic fungus Alternaria alternata.</title>
        <authorList>
            <person name="Tsuge T."/>
            <person name="Harimoto Y."/>
            <person name="Akimitsu K."/>
            <person name="Ohtani K."/>
            <person name="Kodama M."/>
            <person name="Akagi Y."/>
            <person name="Egusa M."/>
            <person name="Yamamoto M."/>
            <person name="Otani H."/>
        </authorList>
    </citation>
    <scope>REVIEW ON HOST-SELECTIVE TOXINS</scope>
</reference>
<proteinExistence type="inferred from homology"/>
<protein>
    <recommendedName>
        <fullName evidence="10">Highly reducing polyketide synthase AFT9-1</fullName>
        <shortName evidence="11">HR-PKS AFT9-1</shortName>
        <ecNumber evidence="12">2.3.1.-</ecNumber>
    </recommendedName>
    <alternativeName>
        <fullName evidence="10">AF-toxin biosynthesis protein 9-1</fullName>
    </alternativeName>
</protein>
<gene>
    <name evidence="10" type="primary">AFT9-1</name>
</gene>
<comment type="function">
    <text evidence="5 6 7 8 9">Highly reducing polyketide synthase; part of the gene clusters that mediate the biosynthesis of the host-selective toxins (HSTs) AF-toxins responsible for Alternaria black spot of strawberry disease by the strawberry pathotype (Ref.1). AF-toxin I and III are valine derivatives of 2,3-dyhydroxy-isovaleric acid and 2-hydroxy-isovaleric acid respectively, while AF II is an isoleucine derivative of 2-hydroxy-valeric acid (PubMed:15066029, PubMed:22846083, Ref.1). These derivatives are bound to a 9,10-epoxy-8-hydroxy-9-methyl-decatrienoic acid (EDA) moiety (PubMed:15066029, PubMed:22846083, Ref.1). On cellular level, AF-toxins affect plasma membrane of susceptible cells and cause a sudden increase in loss of K(+) after a few minutes of toxin treatment (PubMed:22846083). The aldo-keto reductase AFTS1 catalyzes the conversion of 2-keto-isovaleric acid (2-KIV) to 2-hydroxy-isovaleric acid (2-HIV) by reduction of its ketone to an alcohol (PubMed:15066029). The acyl-CoA ligase AFT1, the hydrolase AFT2 and the enoyl-CoA hydratases AFT3 and AFT6, but also the polyketide synthase AFT9, the acyl-CoA dehydrogenase AFT10, the cytochrome P450 monooxygenase AFT11 and the oxidoreductase AFT12 are all involved in the biosynthesis of the AK-, AF- and ACT-toxin common EDA structural moiety (PubMed:12019223, PubMed:18986255, Ref.1). The exact function of each enzyme, and of additional enzymes identified within the AF-toxin clusters have still to be determined (PubMed:12019223, PubMed:18986255, Ref.1).</text>
</comment>
<comment type="pathway">
    <text evidence="12">Mycotoxin biosynthesis.</text>
</comment>
<comment type="miscellaneous">
    <text evidence="5">Gene clusters encoding host-selective toxins (HSTs) are localized on conditionally dispensable chromosomes (CDCs), also called supernumerary chromosomes, where they are present in multiple copies (PubMed:12019223). The CDCs are not essential for saprophytic growth but controls host-selective pathogenicity (PubMed:12019223).</text>
</comment>
<keyword id="KW-0012">Acyltransferase</keyword>
<keyword id="KW-0489">Methyltransferase</keyword>
<keyword id="KW-0511">Multifunctional enzyme</keyword>
<keyword id="KW-0521">NADP</keyword>
<keyword id="KW-0560">Oxidoreductase</keyword>
<keyword id="KW-0596">Phosphopantetheine</keyword>
<keyword id="KW-0597">Phosphoprotein</keyword>
<keyword id="KW-0808">Transferase</keyword>
<keyword id="KW-0843">Virulence</keyword>
<evidence type="ECO:0000255" key="1"/>
<evidence type="ECO:0000255" key="2">
    <source>
        <dbReference type="PROSITE-ProRule" id="PRU00258"/>
    </source>
</evidence>
<evidence type="ECO:0000255" key="3">
    <source>
        <dbReference type="PROSITE-ProRule" id="PRU01348"/>
    </source>
</evidence>
<evidence type="ECO:0000255" key="4">
    <source>
        <dbReference type="PROSITE-ProRule" id="PRU01363"/>
    </source>
</evidence>
<evidence type="ECO:0000269" key="5">
    <source>
    </source>
</evidence>
<evidence type="ECO:0000269" key="6">
    <source>
    </source>
</evidence>
<evidence type="ECO:0000269" key="7">
    <source>
    </source>
</evidence>
<evidence type="ECO:0000269" key="8">
    <source ref="1"/>
</evidence>
<evidence type="ECO:0000303" key="9">
    <source>
    </source>
</evidence>
<evidence type="ECO:0000303" key="10">
    <source ref="1"/>
</evidence>
<evidence type="ECO:0000305" key="11"/>
<evidence type="ECO:0000305" key="12">
    <source ref="1"/>
</evidence>
<feature type="chain" id="PRO_0000444853" description="Highly reducing polyketide synthase AFT9-1">
    <location>
        <begin position="1"/>
        <end position="3005"/>
    </location>
</feature>
<feature type="domain" description="Ketosynthase family 3 (KS3)" evidence="3">
    <location>
        <begin position="1"/>
        <end position="337"/>
    </location>
</feature>
<feature type="domain" description="PKS/mFAS DH" evidence="4">
    <location>
        <begin position="821"/>
        <end position="1118"/>
    </location>
</feature>
<feature type="domain" description="Carrier" evidence="2">
    <location>
        <begin position="2293"/>
        <end position="2375"/>
    </location>
</feature>
<feature type="region of interest" description="Malonyl-CoA:ACP transacylase (MAT) domain" evidence="1">
    <location>
        <begin position="437"/>
        <end position="751"/>
    </location>
</feature>
<feature type="region of interest" description="Dehydratase (DH) domain" evidence="1">
    <location>
        <begin position="821"/>
        <end position="1114"/>
    </location>
</feature>
<feature type="region of interest" description="N-terminal hotdog fold" evidence="4">
    <location>
        <begin position="821"/>
        <end position="936"/>
    </location>
</feature>
<feature type="region of interest" description="C-terminal hotdog fold" evidence="4">
    <location>
        <begin position="963"/>
        <end position="1118"/>
    </location>
</feature>
<feature type="region of interest" description="Methyltransferase (CMet) domain" evidence="1">
    <location>
        <begin position="1259"/>
        <end position="1445"/>
    </location>
</feature>
<feature type="region of interest" description="Enoyl reductase (ER) (ER) domain" evidence="1">
    <location>
        <begin position="1683"/>
        <end position="1985"/>
    </location>
</feature>
<feature type="region of interest" description="Ketoreductase (KR) domain" evidence="1">
    <location>
        <begin position="2008"/>
        <end position="2191"/>
    </location>
</feature>
<feature type="active site" description="For beta-ketoacyl synthase activity" evidence="3">
    <location>
        <position position="87"/>
    </location>
</feature>
<feature type="active site" description="For beta-ketoacyl synthase activity" evidence="3">
    <location>
        <position position="222"/>
    </location>
</feature>
<feature type="active site" description="For beta-ketoacyl synthase activity" evidence="3">
    <location>
        <position position="260"/>
    </location>
</feature>
<feature type="active site" description="Proton acceptor; for dehydratase activity" evidence="4">
    <location>
        <position position="853"/>
    </location>
</feature>
<feature type="active site" description="Proton donor; for dehydratase activity" evidence="4">
    <location>
        <position position="1028"/>
    </location>
</feature>
<feature type="modified residue" description="O-(pantetheine 4'-phosphoryl)serine" evidence="2">
    <location>
        <position position="2335"/>
    </location>
</feature>